<organism>
    <name type="scientific">Escherichia coli (strain K12)</name>
    <dbReference type="NCBI Taxonomy" id="83333"/>
    <lineage>
        <taxon>Bacteria</taxon>
        <taxon>Pseudomonadati</taxon>
        <taxon>Pseudomonadota</taxon>
        <taxon>Gammaproteobacteria</taxon>
        <taxon>Enterobacterales</taxon>
        <taxon>Enterobacteriaceae</taxon>
        <taxon>Escherichia</taxon>
    </lineage>
</organism>
<feature type="chain" id="PRO_0000097386" description="Regulator of nucleoside diphosphate kinase">
    <location>
        <begin position="1"/>
        <end position="136"/>
    </location>
</feature>
<feature type="strand" evidence="5">
    <location>
        <begin position="7"/>
        <end position="9"/>
    </location>
</feature>
<feature type="helix" evidence="5">
    <location>
        <begin position="10"/>
        <end position="21"/>
    </location>
</feature>
<feature type="helix" evidence="5">
    <location>
        <begin position="23"/>
        <end position="25"/>
    </location>
</feature>
<feature type="helix" evidence="5">
    <location>
        <begin position="29"/>
        <end position="39"/>
    </location>
</feature>
<feature type="strand" evidence="5">
    <location>
        <begin position="42"/>
        <end position="44"/>
    </location>
</feature>
<feature type="helix" evidence="5">
    <location>
        <begin position="46"/>
        <end position="48"/>
    </location>
</feature>
<feature type="strand" evidence="5">
    <location>
        <begin position="59"/>
        <end position="64"/>
    </location>
</feature>
<feature type="turn" evidence="5">
    <location>
        <begin position="65"/>
        <end position="67"/>
    </location>
</feature>
<feature type="strand" evidence="5">
    <location>
        <begin position="70"/>
        <end position="76"/>
    </location>
</feature>
<feature type="helix" evidence="5">
    <location>
        <begin position="78"/>
        <end position="80"/>
    </location>
</feature>
<feature type="turn" evidence="5">
    <location>
        <begin position="84"/>
        <end position="86"/>
    </location>
</feature>
<feature type="strand" evidence="5">
    <location>
        <begin position="87"/>
        <end position="89"/>
    </location>
</feature>
<feature type="helix" evidence="5">
    <location>
        <begin position="93"/>
        <end position="98"/>
    </location>
</feature>
<feature type="strand" evidence="5">
    <location>
        <begin position="106"/>
        <end position="111"/>
    </location>
</feature>
<feature type="turn" evidence="5">
    <location>
        <begin position="112"/>
        <end position="114"/>
    </location>
</feature>
<feature type="strand" evidence="5">
    <location>
        <begin position="115"/>
        <end position="126"/>
    </location>
</feature>
<feature type="turn" evidence="5">
    <location>
        <begin position="128"/>
        <end position="132"/>
    </location>
</feature>
<name>RNK_ECOLI</name>
<reference key="1">
    <citation type="journal article" date="1995" name="Mol. Microbiol.">
        <title>The Escherichia coli genes sspA and rnk can functionally replace the Pseudomonas aeruginosa alginate regulatory gene algR2.</title>
        <authorList>
            <person name="Schlictman D."/>
            <person name="Shankar S."/>
            <person name="Chakrabarty A.M."/>
        </authorList>
    </citation>
    <scope>NUCLEOTIDE SEQUENCE [GENOMIC DNA]</scope>
    <scope>GENE NAME</scope>
</reference>
<reference key="2">
    <citation type="journal article" date="1996" name="DNA Res.">
        <title>A 718-kb DNA sequence of the Escherichia coli K-12 genome corresponding to the 12.7-28.0 min region on the linkage map.</title>
        <authorList>
            <person name="Oshima T."/>
            <person name="Aiba H."/>
            <person name="Baba T."/>
            <person name="Fujita K."/>
            <person name="Hayashi K."/>
            <person name="Honjo A."/>
            <person name="Ikemoto K."/>
            <person name="Inada T."/>
            <person name="Itoh T."/>
            <person name="Kajihara M."/>
            <person name="Kanai K."/>
            <person name="Kashimoto K."/>
            <person name="Kimura S."/>
            <person name="Kitagawa M."/>
            <person name="Makino K."/>
            <person name="Masuda S."/>
            <person name="Miki T."/>
            <person name="Mizobuchi K."/>
            <person name="Mori H."/>
            <person name="Motomura K."/>
            <person name="Nakamura Y."/>
            <person name="Nashimoto H."/>
            <person name="Nishio Y."/>
            <person name="Saito N."/>
            <person name="Sampei G."/>
            <person name="Seki Y."/>
            <person name="Tagami H."/>
            <person name="Takemoto K."/>
            <person name="Wada C."/>
            <person name="Yamamoto Y."/>
            <person name="Yano M."/>
            <person name="Horiuchi T."/>
        </authorList>
    </citation>
    <scope>NUCLEOTIDE SEQUENCE [LARGE SCALE GENOMIC DNA]</scope>
    <source>
        <strain>K12</strain>
    </source>
</reference>
<reference key="3">
    <citation type="submission" date="1997-01" db="EMBL/GenBank/DDBJ databases">
        <title>Sequence of minutes 4-25 of Escherichia coli.</title>
        <authorList>
            <person name="Chung E."/>
            <person name="Allen E."/>
            <person name="Araujo R."/>
            <person name="Aparicio A.M."/>
            <person name="Davis K."/>
            <person name="Duncan M."/>
            <person name="Federspiel N."/>
            <person name="Hyman R."/>
            <person name="Kalman S."/>
            <person name="Komp C."/>
            <person name="Kurdi O."/>
            <person name="Lew H."/>
            <person name="Lin D."/>
            <person name="Namath A."/>
            <person name="Oefner P."/>
            <person name="Roberts D."/>
            <person name="Schramm S."/>
            <person name="Davis R.W."/>
        </authorList>
    </citation>
    <scope>NUCLEOTIDE SEQUENCE [LARGE SCALE GENOMIC DNA]</scope>
    <source>
        <strain>K12 / MG1655 / ATCC 47076</strain>
    </source>
</reference>
<reference key="4">
    <citation type="journal article" date="1997" name="Science">
        <title>The complete genome sequence of Escherichia coli K-12.</title>
        <authorList>
            <person name="Blattner F.R."/>
            <person name="Plunkett G. III"/>
            <person name="Bloch C.A."/>
            <person name="Perna N.T."/>
            <person name="Burland V."/>
            <person name="Riley M."/>
            <person name="Collado-Vides J."/>
            <person name="Glasner J.D."/>
            <person name="Rode C.K."/>
            <person name="Mayhew G.F."/>
            <person name="Gregor J."/>
            <person name="Davis N.W."/>
            <person name="Kirkpatrick H.A."/>
            <person name="Goeden M.A."/>
            <person name="Rose D.J."/>
            <person name="Mau B."/>
            <person name="Shao Y."/>
        </authorList>
    </citation>
    <scope>NUCLEOTIDE SEQUENCE [LARGE SCALE GENOMIC DNA]</scope>
    <source>
        <strain>K12 / MG1655 / ATCC 47076</strain>
    </source>
</reference>
<reference key="5">
    <citation type="journal article" date="2006" name="Mol. Syst. Biol.">
        <title>Highly accurate genome sequences of Escherichia coli K-12 strains MG1655 and W3110.</title>
        <authorList>
            <person name="Hayashi K."/>
            <person name="Morooka N."/>
            <person name="Yamamoto Y."/>
            <person name="Fujita K."/>
            <person name="Isono K."/>
            <person name="Choi S."/>
            <person name="Ohtsubo E."/>
            <person name="Baba T."/>
            <person name="Wanner B.L."/>
            <person name="Mori H."/>
            <person name="Horiuchi T."/>
        </authorList>
    </citation>
    <scope>NUCLEOTIDE SEQUENCE [LARGE SCALE GENOMIC DNA]</scope>
    <source>
        <strain>K12 / W3110 / ATCC 27325 / DSM 5911</strain>
    </source>
</reference>
<reference key="6">
    <citation type="journal article" date="1995" name="Mol. Microbiol.">
        <title>Regulation of nucleoside diphosphate kinase and an alternative kinase in Escherichia coli: role of the sspA and rnk genes in nucleoside triphosphate formation.</title>
        <authorList>
            <person name="Shankar S."/>
            <person name="Schlictman D."/>
            <person name="Chakrabarty A.M."/>
        </authorList>
    </citation>
    <scope>FUNCTION</scope>
    <scope>DISRUPTION PHENOTYPE</scope>
</reference>
<reference key="7">
    <citation type="journal article" date="2008" name="J. Mol. Biol.">
        <title>Crystal structure of Escherichia coli Rnk, a new RNA polymerase-interacting protein.</title>
        <authorList>
            <person name="Lamour V."/>
            <person name="Rutherford S.T."/>
            <person name="Kuznedelov K."/>
            <person name="Ramagopal U.A."/>
            <person name="Gourse R.L."/>
            <person name="Severinov K."/>
            <person name="Darst S.A."/>
        </authorList>
    </citation>
    <scope>X-RAY CRYSTALLOGRAPHY (1.91 ANGSTROMS)</scope>
    <scope>FUNCTION</scope>
    <scope>INTERACTION WITH RNA POLYMERASE</scope>
    <scope>DOMAIN</scope>
</reference>
<gene>
    <name evidence="1" type="primary">rnk</name>
    <name type="ordered locus">b0610</name>
    <name type="ordered locus">JW0602</name>
</gene>
<evidence type="ECO:0000255" key="1">
    <source>
        <dbReference type="HAMAP-Rule" id="MF_00954"/>
    </source>
</evidence>
<evidence type="ECO:0000269" key="2">
    <source>
    </source>
</evidence>
<evidence type="ECO:0000269" key="3">
    <source>
    </source>
</evidence>
<evidence type="ECO:0000305" key="4">
    <source>
    </source>
</evidence>
<evidence type="ECO:0007829" key="5">
    <source>
        <dbReference type="PDB" id="3BMB"/>
    </source>
</evidence>
<dbReference type="EMBL" id="L37900">
    <property type="protein sequence ID" value="AAC36933.1"/>
    <property type="molecule type" value="Genomic_DNA"/>
</dbReference>
<dbReference type="EMBL" id="U82598">
    <property type="protein sequence ID" value="AAB40810.1"/>
    <property type="molecule type" value="Genomic_DNA"/>
</dbReference>
<dbReference type="EMBL" id="U00096">
    <property type="protein sequence ID" value="AAC73711.1"/>
    <property type="molecule type" value="Genomic_DNA"/>
</dbReference>
<dbReference type="EMBL" id="AP009048">
    <property type="protein sequence ID" value="BAA35239.1"/>
    <property type="molecule type" value="Genomic_DNA"/>
</dbReference>
<dbReference type="PIR" id="I57917">
    <property type="entry name" value="I57917"/>
</dbReference>
<dbReference type="RefSeq" id="NP_415143.1">
    <property type="nucleotide sequence ID" value="NC_000913.3"/>
</dbReference>
<dbReference type="RefSeq" id="WP_000089731.1">
    <property type="nucleotide sequence ID" value="NZ_STEB01000031.1"/>
</dbReference>
<dbReference type="PDB" id="3BMB">
    <property type="method" value="X-ray"/>
    <property type="resolution" value="1.91 A"/>
    <property type="chains" value="A/B=1-136"/>
</dbReference>
<dbReference type="PDBsum" id="3BMB"/>
<dbReference type="SMR" id="P0AFW4"/>
<dbReference type="BioGRID" id="4259900">
    <property type="interactions" value="28"/>
</dbReference>
<dbReference type="BioGRID" id="851863">
    <property type="interactions" value="7"/>
</dbReference>
<dbReference type="DIP" id="DIP-48048N"/>
<dbReference type="FunCoup" id="P0AFW4">
    <property type="interactions" value="96"/>
</dbReference>
<dbReference type="IntAct" id="P0AFW4">
    <property type="interactions" value="28"/>
</dbReference>
<dbReference type="STRING" id="511145.b0610"/>
<dbReference type="jPOST" id="P0AFW4"/>
<dbReference type="PaxDb" id="511145-b0610"/>
<dbReference type="EnsemblBacteria" id="AAC73711">
    <property type="protein sequence ID" value="AAC73711"/>
    <property type="gene ID" value="b0610"/>
</dbReference>
<dbReference type="GeneID" id="93776875"/>
<dbReference type="GeneID" id="947546"/>
<dbReference type="KEGG" id="ecj:JW0602"/>
<dbReference type="KEGG" id="eco:b0610"/>
<dbReference type="KEGG" id="ecoc:C3026_03050"/>
<dbReference type="PATRIC" id="fig|1411691.4.peg.1658"/>
<dbReference type="EchoBASE" id="EB2518"/>
<dbReference type="eggNOG" id="COG0782">
    <property type="taxonomic scope" value="Bacteria"/>
</dbReference>
<dbReference type="HOGENOM" id="CLU_120358_1_1_6"/>
<dbReference type="InParanoid" id="P0AFW4"/>
<dbReference type="OMA" id="WTLVYPD"/>
<dbReference type="OrthoDB" id="192847at2"/>
<dbReference type="PhylomeDB" id="P0AFW4"/>
<dbReference type="BioCyc" id="EcoCyc:G6337-MONOMER"/>
<dbReference type="EvolutionaryTrace" id="P0AFW4"/>
<dbReference type="PRO" id="PR:P0AFW4"/>
<dbReference type="Proteomes" id="UP000000625">
    <property type="component" value="Chromosome"/>
</dbReference>
<dbReference type="GO" id="GO:0003677">
    <property type="term" value="F:DNA binding"/>
    <property type="evidence" value="ECO:0007669"/>
    <property type="project" value="InterPro"/>
</dbReference>
<dbReference type="GO" id="GO:0070063">
    <property type="term" value="F:RNA polymerase binding"/>
    <property type="evidence" value="ECO:0007669"/>
    <property type="project" value="InterPro"/>
</dbReference>
<dbReference type="GO" id="GO:0006354">
    <property type="term" value="P:DNA-templated transcription elongation"/>
    <property type="evidence" value="ECO:0000318"/>
    <property type="project" value="GO_Central"/>
</dbReference>
<dbReference type="GO" id="GO:0032784">
    <property type="term" value="P:regulation of DNA-templated transcription elongation"/>
    <property type="evidence" value="ECO:0007669"/>
    <property type="project" value="InterPro"/>
</dbReference>
<dbReference type="FunFam" id="1.10.286.20:FF:000002">
    <property type="entry name" value="Regulator of nucleoside diphosphate kinase"/>
    <property type="match status" value="1"/>
</dbReference>
<dbReference type="FunFam" id="3.10.50.30:FF:000002">
    <property type="entry name" value="Regulator of nucleoside diphosphate kinase"/>
    <property type="match status" value="1"/>
</dbReference>
<dbReference type="Gene3D" id="1.10.286.20">
    <property type="match status" value="1"/>
</dbReference>
<dbReference type="Gene3D" id="3.10.50.30">
    <property type="entry name" value="Transcription elongation factor, GreA/GreB, C-terminal domain"/>
    <property type="match status" value="1"/>
</dbReference>
<dbReference type="HAMAP" id="MF_00954">
    <property type="entry name" value="Rnk"/>
    <property type="match status" value="1"/>
</dbReference>
<dbReference type="InterPro" id="IPR036953">
    <property type="entry name" value="GreA/GreB_C_sf"/>
</dbReference>
<dbReference type="InterPro" id="IPR028625">
    <property type="entry name" value="Rnk"/>
</dbReference>
<dbReference type="InterPro" id="IPR029462">
    <property type="entry name" value="Rnk_N"/>
</dbReference>
<dbReference type="InterPro" id="IPR001437">
    <property type="entry name" value="Tscrpt_elong_fac_GreA/B_C"/>
</dbReference>
<dbReference type="InterPro" id="IPR023459">
    <property type="entry name" value="Tscrpt_elong_fac_GreA/B_fam"/>
</dbReference>
<dbReference type="NCBIfam" id="NF004396">
    <property type="entry name" value="PRK05753.1"/>
    <property type="match status" value="1"/>
</dbReference>
<dbReference type="PANTHER" id="PTHR30437:SF5">
    <property type="entry name" value="REGULATOR OF NUCLEOSIDE DIPHOSPHATE KINASE"/>
    <property type="match status" value="1"/>
</dbReference>
<dbReference type="PANTHER" id="PTHR30437">
    <property type="entry name" value="TRANSCRIPTION ELONGATION FACTOR GREA"/>
    <property type="match status" value="1"/>
</dbReference>
<dbReference type="Pfam" id="PF01272">
    <property type="entry name" value="GreA_GreB"/>
    <property type="match status" value="1"/>
</dbReference>
<dbReference type="Pfam" id="PF14760">
    <property type="entry name" value="Rnk_N"/>
    <property type="match status" value="1"/>
</dbReference>
<dbReference type="SUPFAM" id="SSF54534">
    <property type="entry name" value="FKBP-like"/>
    <property type="match status" value="1"/>
</dbReference>
<proteinExistence type="evidence at protein level"/>
<protein>
    <recommendedName>
        <fullName evidence="1">Regulator of nucleoside diphosphate kinase</fullName>
    </recommendedName>
</protein>
<keyword id="KW-0002">3D-structure</keyword>
<keyword id="KW-1185">Reference proteome</keyword>
<comment type="function">
    <text evidence="1 2 3">May act as an anti-Gre factor. Regulates the level of the nucleoside diphosphate kinase Ndk.</text>
</comment>
<comment type="subunit">
    <text evidence="1 2">Interacts with the RNA polymerase.</text>
</comment>
<comment type="interaction">
    <interactant intactId="EBI-553769">
        <id>P0AFW4</id>
    </interactant>
    <interactant intactId="EBI-1113316">
        <id>P0ACJ0</id>
        <label>lrp</label>
    </interactant>
    <organismsDiffer>false</organismsDiffer>
    <experiments>4</experiments>
</comment>
<comment type="interaction">
    <interactant intactId="EBI-553769">
        <id>P0AFW4</id>
    </interactant>
    <interactant intactId="EBI-1118992">
        <id>P77174</id>
        <label>ybdM</label>
    </interactant>
    <organismsDiffer>false</organismsDiffer>
    <experiments>5</experiments>
</comment>
<comment type="domain">
    <text evidence="2">Contains a short N-terminal coiled-coil domain and a C-terminal globular domain.</text>
</comment>
<comment type="disruption phenotype">
    <text evidence="3">Mutant shows a significant reduction in the level of Ndk.</text>
</comment>
<comment type="miscellaneous">
    <text evidence="4">Can restore alginate synthesis and Ndk activity in the aglQ mutant of P.aeruginosa.</text>
</comment>
<comment type="similarity">
    <text evidence="1">Belongs to the Rnk family.</text>
</comment>
<accession>P0AFW4</accession>
<accession>P40679</accession>
<sequence length="136" mass="14927">MSRPTIIINDLDAERIDILLEQPAYAGLPIADALNAELDRAQMCSPEEMPHDVVTMNSRVKFRNLSDGEVRVRTLVYPAKMTDSNTQLSVMAPVGAALLGLRVGDSIHWELPGGVATHLEVLELEYQPEAAGDYLL</sequence>